<comment type="function">
    <text evidence="12">May be part of the rubber biosynthesis machinery. Plays a role in rubber elongation.</text>
</comment>
<comment type="subunit">
    <text evidence="5 6">In solution, able to form amyloid fibers and aggregates rich in beta-sheets (PubMed:24239687). Interaction with membrane stabilizes the protein, inhibiting the amyloid state and aggregation (PubMed:24036080).</text>
</comment>
<comment type="subcellular location">
    <subcellularLocation>
        <location evidence="5">Cytoplasm</location>
    </subcellularLocation>
    <text evidence="5">Tightly bound on latex large rubber particles. Binds first to various type of lipids and then inserts into the membrane as protein rafts.</text>
</comment>
<comment type="tissue specificity">
    <text evidence="3">Localized in all laticifer layers.</text>
</comment>
<comment type="induction">
    <text evidence="1 2 4">Induced by tapping (PubMed:12461132, PubMed:17632724). Not induced by wounding, ethephon or abscisic acid treatment (PubMed:12461132). Induced by ethephon or ethylene (PubMed:17632724, PubMed:22162870).</text>
</comment>
<comment type="PTM">
    <text evidence="6">Not glycosylated.</text>
</comment>
<comment type="allergen">
    <text evidence="8">Causes an allergic reaction in human. Involved in latex allergic reactions.</text>
</comment>
<comment type="similarity">
    <text evidence="11">Belongs to the REF/SRPP family.</text>
</comment>
<sequence>MAEDEDNQQGQGEGLKYLGFVQDAATYAVTTFSNVYLFAKDKSGPLQPGVDIIEGPVKNVAVPLYNRFSYIPNGALKFVDSTVVASVTIIDRSLPPIVKDASIQVVSAIRAAPEAARSLASSLPGQTKILAKVFYGEN</sequence>
<organism>
    <name type="scientific">Hevea brasiliensis</name>
    <name type="common">Para rubber tree</name>
    <name type="synonym">Siphonia brasiliensis</name>
    <dbReference type="NCBI Taxonomy" id="3981"/>
    <lineage>
        <taxon>Eukaryota</taxon>
        <taxon>Viridiplantae</taxon>
        <taxon>Streptophyta</taxon>
        <taxon>Embryophyta</taxon>
        <taxon>Tracheophyta</taxon>
        <taxon>Spermatophyta</taxon>
        <taxon>Magnoliopsida</taxon>
        <taxon>eudicotyledons</taxon>
        <taxon>Gunneridae</taxon>
        <taxon>Pentapetalae</taxon>
        <taxon>rosids</taxon>
        <taxon>fabids</taxon>
        <taxon>Malpighiales</taxon>
        <taxon>Euphorbiaceae</taxon>
        <taxon>Crotonoideae</taxon>
        <taxon>Micrandreae</taxon>
        <taxon>Hevea</taxon>
    </lineage>
</organism>
<reference key="1">
    <citation type="journal article" date="1991" name="Plant Mol. Biol.">
        <title>Molecular cloning and nucleotide sequencing of the rubber elongation factor gene from Hevea brasiliensis.</title>
        <authorList>
            <person name="Attanyaka D.P.S.T.G."/>
            <person name="Kekwick R.G.O."/>
            <person name="Franklin F.C.H."/>
        </authorList>
    </citation>
    <scope>NUCLEOTIDE SEQUENCE [MRNA]</scope>
    <source>
        <tissue>Laticifer</tissue>
    </source>
</reference>
<reference key="2">
    <citation type="journal article" date="1989" name="J. Biol. Chem.">
        <title>Amino acid sequence of rubber elongation factor protein associated with rubber particles in Hevea latex.</title>
        <authorList>
            <person name="Dennis M.S."/>
            <person name="Henzel W.J."/>
            <person name="Kohr W."/>
            <person name="Light D.R."/>
        </authorList>
    </citation>
    <scope>PROTEIN SEQUENCE OF 2-138</scope>
    <scope>ACETYLATION AT ALA-2</scope>
</reference>
<reference key="3">
    <citation type="journal article" date="1996" name="J. Allergy Clin. Immunol.">
        <title>The 14.6 kd rubber elongation factor (Hev b 1) and 24 kd (Hev b 3) rubber particle proteins are recognized by IgE from patients with spina bifida and latex allergy.</title>
        <authorList>
            <person name="Yeang H.Y."/>
            <person name="Cheong K.F."/>
            <person name="Sunderasan E."/>
            <person name="Hamzah S."/>
            <person name="Chew N.P."/>
            <person name="Hamid S."/>
            <person name="Hamilton R.G."/>
            <person name="Cardosa M.J."/>
        </authorList>
    </citation>
    <scope>ALLERGEN</scope>
</reference>
<reference key="4">
    <citation type="journal article" date="2000" name="Mol. Immunol.">
        <title>Unique and shared IgE epitopes of Hev b 1 and Hev b 3 in latex allergy.</title>
        <authorList>
            <person name="Banerjee B."/>
            <person name="Kanitpong K."/>
            <person name="Fink J.N."/>
            <person name="Zussman M."/>
            <person name="Sussman G.L."/>
            <person name="Kelly K.J."/>
            <person name="Kurup V.P."/>
        </authorList>
    </citation>
    <scope>EPITOPE MAPPING</scope>
</reference>
<reference key="5">
    <citation type="journal article" date="2002" name="Plant Cell Physiol.">
        <title>Characterization of polypeptides accumulated in the latex cytosol of rubber trees affected by the tapping panel dryness syndrome.</title>
        <authorList>
            <person name="Sookmark U."/>
            <person name="Pujade-Renaud V."/>
            <person name="Chrestin H."/>
            <person name="Lacote R."/>
            <person name="Naiyanetr C."/>
            <person name="Seguin M."/>
            <person name="Romruensukharom P."/>
            <person name="Narangajavana J."/>
        </authorList>
    </citation>
    <scope>INDUCTION</scope>
</reference>
<reference key="6">
    <citation type="journal article" date="2007" name="Plant Cell Rep.">
        <title>Differential expression pattern of rubber elongation factor (REF) mRNA transcripts from high and low yielding clones of rubber tree (Hevea brasiliensis Muell. Arg.).</title>
        <authorList>
            <person name="Priya P."/>
            <person name="Venkatachalam P."/>
            <person name="Thulaseedharan A."/>
        </authorList>
    </citation>
    <scope>INDUCTION BY TAPPING AND ETHEPHON</scope>
</reference>
<reference key="7">
    <citation type="journal article" date="2009" name="Planta">
        <title>Histochemical study of detailed laticifer structure and rubber biosynthesis-related protein localization in Hevea brasiliensis using spectral confocal laser scanning microscopy.</title>
        <authorList>
            <person name="Sando T."/>
            <person name="Hayashi T."/>
            <person name="Takeda T."/>
            <person name="Akiyama Y."/>
            <person name="Nakazawa Y."/>
            <person name="Fukusaki E."/>
            <person name="Kobayashi A."/>
        </authorList>
    </citation>
    <scope>TISSUE SPECIFICITY</scope>
</reference>
<reference key="8">
    <citation type="journal article" date="2012" name="J. Exp. Bot.">
        <title>Metabolic routes affecting rubber biosynthesis in Hevea brasiliensis latex.</title>
        <authorList>
            <person name="Chow K.S."/>
            <person name="Mat-Isa M.N."/>
            <person name="Bahari A."/>
            <person name="Ghazali A.K."/>
            <person name="Alias H."/>
            <person name="Mohd-Zainuddin Z."/>
            <person name="Hoh C.C."/>
            <person name="Wan K.L."/>
        </authorList>
    </citation>
    <scope>INDUCTION BY ETHYLENE</scope>
</reference>
<reference key="9">
    <citation type="journal article" date="2014" name="Biochim. Biophys. Acta">
        <title>Rubber particle proteins, HbREF and HbSRPP, show different interactions with model membranes.</title>
        <authorList>
            <person name="Berthelot K."/>
            <person name="Lecomte S."/>
            <person name="Estevez Y."/>
            <person name="Zhendre V."/>
            <person name="Henry S."/>
            <person name="Thevenot J."/>
            <person name="Dufourc E.J."/>
            <person name="Alves I.D."/>
            <person name="Peruch F."/>
        </authorList>
    </citation>
    <scope>SUBCELLULAR LOCATION</scope>
    <scope>SUBUNIT</scope>
</reference>
<reference key="10">
    <citation type="journal article" date="2014" name="Biochim. Biophys. Acta">
        <title>Homologous Hevea brasiliensis REF (Hevb1) and SRPP (Hevb3) present different auto-assembling.</title>
        <authorList>
            <person name="Berthelot K."/>
            <person name="Lecomte S."/>
            <person name="Estevez Y."/>
            <person name="Coulary-Salin B."/>
            <person name="Peruch F."/>
        </authorList>
    </citation>
    <scope>SUBUNIT</scope>
    <scope>LACK OF GLYCOSYLATION</scope>
</reference>
<reference key="11">
    <citation type="journal article" date="2014" name="Biochimie">
        <title>Hevea brasiliensis REF (Hev b 1) and SRPP (Hev b 3): An overview on rubber particle proteins.</title>
        <authorList>
            <person name="Berthelot K."/>
            <person name="Lecomte S."/>
            <person name="Estevez Y."/>
            <person name="Peruch F."/>
        </authorList>
    </citation>
    <scope>REVIEW</scope>
</reference>
<dbReference type="EMBL" id="X56535">
    <property type="protein sequence ID" value="CAA39880.1"/>
    <property type="molecule type" value="mRNA"/>
</dbReference>
<dbReference type="PIR" id="S16258">
    <property type="entry name" value="A34309"/>
</dbReference>
<dbReference type="RefSeq" id="NP_001392251.1">
    <property type="nucleotide sequence ID" value="NM_001405322.1"/>
</dbReference>
<dbReference type="Allergome" id="3310">
    <property type="allergen name" value="Hev b 1.0101"/>
</dbReference>
<dbReference type="Allergome" id="379">
    <property type="allergen name" value="Hev b 1"/>
</dbReference>
<dbReference type="iPTMnet" id="P15252"/>
<dbReference type="GeneID" id="110644928"/>
<dbReference type="OrthoDB" id="1905464at2759"/>
<dbReference type="GO" id="GO:0005737">
    <property type="term" value="C:cytoplasm"/>
    <property type="evidence" value="ECO:0007669"/>
    <property type="project" value="UniProtKB-SubCell"/>
</dbReference>
<dbReference type="InterPro" id="IPR008802">
    <property type="entry name" value="REF"/>
</dbReference>
<dbReference type="PANTHER" id="PTHR33732">
    <property type="entry name" value="REF/SRPP-LIKE PROTEIN OS05G0151300/LOC_OS05G05940"/>
    <property type="match status" value="1"/>
</dbReference>
<dbReference type="PANTHER" id="PTHR33732:SF9">
    <property type="entry name" value="REF_SRPP-LIKE PROTEIN OS05G0151300_LOC_OS05G05940"/>
    <property type="match status" value="1"/>
</dbReference>
<dbReference type="Pfam" id="PF05755">
    <property type="entry name" value="REF"/>
    <property type="match status" value="1"/>
</dbReference>
<protein>
    <recommendedName>
        <fullName evidence="9">Rubber elongation factor protein</fullName>
        <shortName evidence="9">HbREF</shortName>
    </recommendedName>
    <allergenName evidence="10">Hev b 1</allergenName>
</protein>
<evidence type="ECO:0000269" key="1">
    <source>
    </source>
</evidence>
<evidence type="ECO:0000269" key="2">
    <source>
    </source>
</evidence>
<evidence type="ECO:0000269" key="3">
    <source>
    </source>
</evidence>
<evidence type="ECO:0000269" key="4">
    <source>
    </source>
</evidence>
<evidence type="ECO:0000269" key="5">
    <source>
    </source>
</evidence>
<evidence type="ECO:0000269" key="6">
    <source>
    </source>
</evidence>
<evidence type="ECO:0000269" key="7">
    <source>
    </source>
</evidence>
<evidence type="ECO:0000269" key="8">
    <source>
    </source>
</evidence>
<evidence type="ECO:0000303" key="9">
    <source>
    </source>
</evidence>
<evidence type="ECO:0000303" key="10">
    <source>
    </source>
</evidence>
<evidence type="ECO:0000305" key="11"/>
<evidence type="ECO:0000305" key="12">
    <source>
    </source>
</evidence>
<keyword id="KW-0007">Acetylation</keyword>
<keyword id="KW-0020">Allergen</keyword>
<keyword id="KW-0963">Cytoplasm</keyword>
<keyword id="KW-0903">Direct protein sequencing</keyword>
<feature type="initiator methionine" description="Removed" evidence="7">
    <location>
        <position position="1"/>
    </location>
</feature>
<feature type="chain" id="PRO_0000221060" description="Rubber elongation factor protein">
    <location>
        <begin position="2"/>
        <end position="138"/>
    </location>
</feature>
<feature type="modified residue" description="N-acetylalanine" evidence="7">
    <location>
        <position position="2"/>
    </location>
</feature>
<name>REF_HEVBR</name>
<proteinExistence type="evidence at protein level"/>
<accession>P15252</accession>